<name>PSBH_PSINU</name>
<dbReference type="EMBL" id="AP004638">
    <property type="protein sequence ID" value="BAB84245.1"/>
    <property type="molecule type" value="Genomic_DNA"/>
</dbReference>
<dbReference type="RefSeq" id="NP_569657.1">
    <property type="nucleotide sequence ID" value="NC_003386.1"/>
</dbReference>
<dbReference type="SMR" id="Q8WHZ4"/>
<dbReference type="GeneID" id="2545144"/>
<dbReference type="GO" id="GO:0009535">
    <property type="term" value="C:chloroplast thylakoid membrane"/>
    <property type="evidence" value="ECO:0007669"/>
    <property type="project" value="UniProtKB-SubCell"/>
</dbReference>
<dbReference type="GO" id="GO:0009523">
    <property type="term" value="C:photosystem II"/>
    <property type="evidence" value="ECO:0007669"/>
    <property type="project" value="UniProtKB-KW"/>
</dbReference>
<dbReference type="GO" id="GO:0042301">
    <property type="term" value="F:phosphate ion binding"/>
    <property type="evidence" value="ECO:0007669"/>
    <property type="project" value="InterPro"/>
</dbReference>
<dbReference type="GO" id="GO:0015979">
    <property type="term" value="P:photosynthesis"/>
    <property type="evidence" value="ECO:0007669"/>
    <property type="project" value="UniProtKB-UniRule"/>
</dbReference>
<dbReference type="GO" id="GO:0050821">
    <property type="term" value="P:protein stabilization"/>
    <property type="evidence" value="ECO:0007669"/>
    <property type="project" value="InterPro"/>
</dbReference>
<dbReference type="Gene3D" id="1.20.5.880">
    <property type="entry name" value="Photosystem II reaction center protein H"/>
    <property type="match status" value="1"/>
</dbReference>
<dbReference type="HAMAP" id="MF_00752">
    <property type="entry name" value="PSII_PsbH"/>
    <property type="match status" value="1"/>
</dbReference>
<dbReference type="InterPro" id="IPR001056">
    <property type="entry name" value="PSII_PsbH"/>
</dbReference>
<dbReference type="InterPro" id="IPR036863">
    <property type="entry name" value="PSII_PsbH_sf"/>
</dbReference>
<dbReference type="NCBIfam" id="NF002728">
    <property type="entry name" value="PRK02624.1"/>
    <property type="match status" value="1"/>
</dbReference>
<dbReference type="PANTHER" id="PTHR34469">
    <property type="entry name" value="PHOTOSYSTEM II REACTION CENTER PROTEIN H"/>
    <property type="match status" value="1"/>
</dbReference>
<dbReference type="PANTHER" id="PTHR34469:SF4">
    <property type="entry name" value="PHOTOSYSTEM II REACTION CENTER PROTEIN H"/>
    <property type="match status" value="1"/>
</dbReference>
<dbReference type="Pfam" id="PF00737">
    <property type="entry name" value="PsbH"/>
    <property type="match status" value="1"/>
</dbReference>
<dbReference type="SUPFAM" id="SSF161025">
    <property type="entry name" value="Photosystem II 10 kDa phosphoprotein PsbH"/>
    <property type="match status" value="1"/>
</dbReference>
<reference key="1">
    <citation type="journal article" date="2004" name="Mol. Biol. Evol.">
        <title>Chloroplast phylogeny indicates that bryophytes are monophyletic.</title>
        <authorList>
            <person name="Nishiyama T."/>
            <person name="Wolf P.G."/>
            <person name="Kugita M."/>
            <person name="Sinclair R.B."/>
            <person name="Sugita M."/>
            <person name="Sugiura C."/>
            <person name="Wakasugi T."/>
            <person name="Yamada K."/>
            <person name="Yoshinaga K."/>
            <person name="Yamaguchi K."/>
            <person name="Ueda K."/>
            <person name="Hasebe M."/>
        </authorList>
    </citation>
    <scope>NUCLEOTIDE SEQUENCE [LARGE SCALE GENOMIC DNA]</scope>
    <source>
        <strain>Kingyoku</strain>
    </source>
</reference>
<sequence>MATKIFDDALRAKPKQSGLGVFLKPLNSEYGRVAPGWGTTPLMGFFMALFAIFLVIILEIYNSSVLLDGLSISW</sequence>
<geneLocation type="chloroplast"/>
<proteinExistence type="inferred from homology"/>
<feature type="initiator methionine" description="Removed" evidence="1">
    <location>
        <position position="1"/>
    </location>
</feature>
<feature type="chain" id="PRO_0000070532" description="Photosystem II reaction center protein H">
    <location>
        <begin position="2"/>
        <end position="74"/>
    </location>
</feature>
<feature type="transmembrane region" description="Helical" evidence="2">
    <location>
        <begin position="41"/>
        <end position="61"/>
    </location>
</feature>
<feature type="modified residue" description="Phosphothreonine" evidence="2">
    <location>
        <position position="3"/>
    </location>
</feature>
<protein>
    <recommendedName>
        <fullName evidence="2">Photosystem II reaction center protein H</fullName>
        <shortName evidence="2">PSII-H</shortName>
    </recommendedName>
    <alternativeName>
        <fullName evidence="2">Photosystem II 10 kDa phosphoprotein</fullName>
    </alternativeName>
</protein>
<comment type="function">
    <text evidence="2">One of the components of the core complex of photosystem II (PSII), required for its stability and/or assembly. PSII is a light-driven water:plastoquinone oxidoreductase that uses light energy to abstract electrons from H(2)O, generating O(2) and a proton gradient subsequently used for ATP formation. It consists of a core antenna complex that captures photons, and an electron transfer chain that converts photonic excitation into a charge separation.</text>
</comment>
<comment type="subunit">
    <text evidence="2">PSII is composed of 1 copy each of membrane proteins PsbA, PsbB, PsbC, PsbD, PsbE, PsbF, PsbH, PsbI, PsbJ, PsbK, PsbL, PsbM, PsbT, PsbX, PsbY, PsbZ, Psb30/Ycf12, at least 3 peripheral proteins of the oxygen-evolving complex and a large number of cofactors. It forms dimeric complexes.</text>
</comment>
<comment type="subcellular location">
    <subcellularLocation>
        <location evidence="2">Plastid</location>
        <location evidence="2">Chloroplast thylakoid membrane</location>
        <topology evidence="2">Single-pass membrane protein</topology>
    </subcellularLocation>
</comment>
<comment type="PTM">
    <text evidence="2">Phosphorylation is a light-dependent reaction catalyzed by a membrane-bound kinase; phosphorylation occurs on Thr residue(s) in the N-terminus of the protein.</text>
</comment>
<comment type="similarity">
    <text evidence="2">Belongs to the PsbH family.</text>
</comment>
<gene>
    <name evidence="2" type="primary">psbH</name>
</gene>
<evidence type="ECO:0000250" key="1">
    <source>
        <dbReference type="UniProtKB" id="P56780"/>
    </source>
</evidence>
<evidence type="ECO:0000255" key="2">
    <source>
        <dbReference type="HAMAP-Rule" id="MF_00752"/>
    </source>
</evidence>
<accession>Q8WHZ4</accession>
<keyword id="KW-0150">Chloroplast</keyword>
<keyword id="KW-0472">Membrane</keyword>
<keyword id="KW-0597">Phosphoprotein</keyword>
<keyword id="KW-0602">Photosynthesis</keyword>
<keyword id="KW-0604">Photosystem II</keyword>
<keyword id="KW-0934">Plastid</keyword>
<keyword id="KW-0793">Thylakoid</keyword>
<keyword id="KW-0812">Transmembrane</keyword>
<keyword id="KW-1133">Transmembrane helix</keyword>
<organism>
    <name type="scientific">Psilotum nudum</name>
    <name type="common">Whisk fern</name>
    <name type="synonym">Lycopodium nudum</name>
    <dbReference type="NCBI Taxonomy" id="3240"/>
    <lineage>
        <taxon>Eukaryota</taxon>
        <taxon>Viridiplantae</taxon>
        <taxon>Streptophyta</taxon>
        <taxon>Embryophyta</taxon>
        <taxon>Tracheophyta</taxon>
        <taxon>Polypodiopsida</taxon>
        <taxon>Ophioglossidae</taxon>
        <taxon>Psilotales</taxon>
        <taxon>Psilotaceae</taxon>
        <taxon>Psilotum</taxon>
    </lineage>
</organism>